<protein>
    <recommendedName>
        <fullName evidence="1">Crossover junction endodeoxyribonuclease RuvC</fullName>
        <ecNumber evidence="1">3.1.21.10</ecNumber>
    </recommendedName>
    <alternativeName>
        <fullName evidence="1">Holliday junction nuclease RuvC</fullName>
    </alternativeName>
    <alternativeName>
        <fullName evidence="1">Holliday junction resolvase RuvC</fullName>
    </alternativeName>
</protein>
<name>RUVC_XANCB</name>
<keyword id="KW-0963">Cytoplasm</keyword>
<keyword id="KW-0227">DNA damage</keyword>
<keyword id="KW-0233">DNA recombination</keyword>
<keyword id="KW-0234">DNA repair</keyword>
<keyword id="KW-0238">DNA-binding</keyword>
<keyword id="KW-0255">Endonuclease</keyword>
<keyword id="KW-0378">Hydrolase</keyword>
<keyword id="KW-0460">Magnesium</keyword>
<keyword id="KW-0479">Metal-binding</keyword>
<keyword id="KW-0540">Nuclease</keyword>
<organism>
    <name type="scientific">Xanthomonas campestris pv. campestris (strain B100)</name>
    <dbReference type="NCBI Taxonomy" id="509169"/>
    <lineage>
        <taxon>Bacteria</taxon>
        <taxon>Pseudomonadati</taxon>
        <taxon>Pseudomonadota</taxon>
        <taxon>Gammaproteobacteria</taxon>
        <taxon>Lysobacterales</taxon>
        <taxon>Lysobacteraceae</taxon>
        <taxon>Xanthomonas</taxon>
    </lineage>
</organism>
<dbReference type="EC" id="3.1.21.10" evidence="1"/>
<dbReference type="EMBL" id="AM920689">
    <property type="protein sequence ID" value="CAP50518.1"/>
    <property type="molecule type" value="Genomic_DNA"/>
</dbReference>
<dbReference type="SMR" id="B0RPY3"/>
<dbReference type="KEGG" id="xca:xcc-b100_1170"/>
<dbReference type="HOGENOM" id="CLU_091257_2_1_6"/>
<dbReference type="Proteomes" id="UP000001188">
    <property type="component" value="Chromosome"/>
</dbReference>
<dbReference type="GO" id="GO:0005737">
    <property type="term" value="C:cytoplasm"/>
    <property type="evidence" value="ECO:0007669"/>
    <property type="project" value="UniProtKB-SubCell"/>
</dbReference>
<dbReference type="GO" id="GO:0048476">
    <property type="term" value="C:Holliday junction resolvase complex"/>
    <property type="evidence" value="ECO:0007669"/>
    <property type="project" value="UniProtKB-UniRule"/>
</dbReference>
<dbReference type="GO" id="GO:0008821">
    <property type="term" value="F:crossover junction DNA endonuclease activity"/>
    <property type="evidence" value="ECO:0007669"/>
    <property type="project" value="UniProtKB-UniRule"/>
</dbReference>
<dbReference type="GO" id="GO:0003677">
    <property type="term" value="F:DNA binding"/>
    <property type="evidence" value="ECO:0007669"/>
    <property type="project" value="UniProtKB-KW"/>
</dbReference>
<dbReference type="GO" id="GO:0000287">
    <property type="term" value="F:magnesium ion binding"/>
    <property type="evidence" value="ECO:0007669"/>
    <property type="project" value="UniProtKB-UniRule"/>
</dbReference>
<dbReference type="GO" id="GO:0006310">
    <property type="term" value="P:DNA recombination"/>
    <property type="evidence" value="ECO:0007669"/>
    <property type="project" value="UniProtKB-UniRule"/>
</dbReference>
<dbReference type="GO" id="GO:0006281">
    <property type="term" value="P:DNA repair"/>
    <property type="evidence" value="ECO:0007669"/>
    <property type="project" value="UniProtKB-UniRule"/>
</dbReference>
<dbReference type="CDD" id="cd16962">
    <property type="entry name" value="RuvC"/>
    <property type="match status" value="1"/>
</dbReference>
<dbReference type="FunFam" id="3.30.420.10:FF:000002">
    <property type="entry name" value="Crossover junction endodeoxyribonuclease RuvC"/>
    <property type="match status" value="1"/>
</dbReference>
<dbReference type="Gene3D" id="3.30.420.10">
    <property type="entry name" value="Ribonuclease H-like superfamily/Ribonuclease H"/>
    <property type="match status" value="1"/>
</dbReference>
<dbReference type="HAMAP" id="MF_00034">
    <property type="entry name" value="RuvC"/>
    <property type="match status" value="1"/>
</dbReference>
<dbReference type="InterPro" id="IPR012337">
    <property type="entry name" value="RNaseH-like_sf"/>
</dbReference>
<dbReference type="InterPro" id="IPR036397">
    <property type="entry name" value="RNaseH_sf"/>
</dbReference>
<dbReference type="InterPro" id="IPR020563">
    <property type="entry name" value="X-over_junc_endoDNase_Mg_BS"/>
</dbReference>
<dbReference type="InterPro" id="IPR002176">
    <property type="entry name" value="X-over_junc_endoDNase_RuvC"/>
</dbReference>
<dbReference type="NCBIfam" id="TIGR00228">
    <property type="entry name" value="ruvC"/>
    <property type="match status" value="1"/>
</dbReference>
<dbReference type="PANTHER" id="PTHR30194">
    <property type="entry name" value="CROSSOVER JUNCTION ENDODEOXYRIBONUCLEASE RUVC"/>
    <property type="match status" value="1"/>
</dbReference>
<dbReference type="PANTHER" id="PTHR30194:SF3">
    <property type="entry name" value="CROSSOVER JUNCTION ENDODEOXYRIBONUCLEASE RUVC"/>
    <property type="match status" value="1"/>
</dbReference>
<dbReference type="Pfam" id="PF02075">
    <property type="entry name" value="RuvC"/>
    <property type="match status" value="1"/>
</dbReference>
<dbReference type="PRINTS" id="PR00696">
    <property type="entry name" value="RSOLVASERUVC"/>
</dbReference>
<dbReference type="SUPFAM" id="SSF53098">
    <property type="entry name" value="Ribonuclease H-like"/>
    <property type="match status" value="1"/>
</dbReference>
<dbReference type="PROSITE" id="PS01321">
    <property type="entry name" value="RUVC"/>
    <property type="match status" value="1"/>
</dbReference>
<feature type="chain" id="PRO_1000090574" description="Crossover junction endodeoxyribonuclease RuvC">
    <location>
        <begin position="1"/>
        <end position="174"/>
    </location>
</feature>
<feature type="active site" evidence="1">
    <location>
        <position position="8"/>
    </location>
</feature>
<feature type="active site" evidence="1">
    <location>
        <position position="69"/>
    </location>
</feature>
<feature type="active site" evidence="1">
    <location>
        <position position="141"/>
    </location>
</feature>
<feature type="binding site" evidence="1">
    <location>
        <position position="8"/>
    </location>
    <ligand>
        <name>Mg(2+)</name>
        <dbReference type="ChEBI" id="CHEBI:18420"/>
        <label>1</label>
    </ligand>
</feature>
<feature type="binding site" evidence="1">
    <location>
        <position position="69"/>
    </location>
    <ligand>
        <name>Mg(2+)</name>
        <dbReference type="ChEBI" id="CHEBI:18420"/>
        <label>2</label>
    </ligand>
</feature>
<feature type="binding site" evidence="1">
    <location>
        <position position="141"/>
    </location>
    <ligand>
        <name>Mg(2+)</name>
        <dbReference type="ChEBI" id="CHEBI:18420"/>
        <label>1</label>
    </ligand>
</feature>
<sequence length="174" mass="18707">MTRILGIDPGSQRTGIGIIDVDESGRSRHVFHAPLVLLGEGDFAQRLKRLLHGLGELIETYQPQEVAIEKVFMGKSADSALKLGHARGAAICAVVLRDLPVHEYAATEIKLALVGKGGADKVQVQHMVGIMLNLKGKLQADAADALAVAITHAHVRATAQRLGVNTQQAWSRKR</sequence>
<gene>
    <name evidence="1" type="primary">ruvC</name>
    <name type="ordered locus">xcc-b100_1170</name>
</gene>
<proteinExistence type="inferred from homology"/>
<accession>B0RPY3</accession>
<comment type="function">
    <text evidence="1">The RuvA-RuvB-RuvC complex processes Holliday junction (HJ) DNA during genetic recombination and DNA repair. Endonuclease that resolves HJ intermediates. Cleaves cruciform DNA by making single-stranded nicks across the HJ at symmetrical positions within the homologous arms, yielding a 5'-phosphate and a 3'-hydroxyl group; requires a central core of homology in the junction. The consensus cleavage sequence is 5'-(A/T)TT(C/G)-3'. Cleavage occurs on the 3'-side of the TT dinucleotide at the point of strand exchange. HJ branch migration catalyzed by RuvA-RuvB allows RuvC to scan DNA until it finds its consensus sequence, where it cleaves and resolves the cruciform DNA.</text>
</comment>
<comment type="catalytic activity">
    <reaction evidence="1">
        <text>Endonucleolytic cleavage at a junction such as a reciprocal single-stranded crossover between two homologous DNA duplexes (Holliday junction).</text>
        <dbReference type="EC" id="3.1.21.10"/>
    </reaction>
</comment>
<comment type="cofactor">
    <cofactor evidence="1">
        <name>Mg(2+)</name>
        <dbReference type="ChEBI" id="CHEBI:18420"/>
    </cofactor>
    <text evidence="1">Binds 2 Mg(2+) ion per subunit.</text>
</comment>
<comment type="subunit">
    <text evidence="1">Homodimer which binds Holliday junction (HJ) DNA. The HJ becomes 2-fold symmetrical on binding to RuvC with unstacked arms; it has a different conformation from HJ DNA in complex with RuvA. In the full resolvosome a probable DNA-RuvA(4)-RuvB(12)-RuvC(2) complex forms which resolves the HJ.</text>
</comment>
<comment type="subcellular location">
    <subcellularLocation>
        <location evidence="1">Cytoplasm</location>
    </subcellularLocation>
</comment>
<comment type="similarity">
    <text evidence="1">Belongs to the RuvC family.</text>
</comment>
<reference key="1">
    <citation type="journal article" date="2008" name="J. Biotechnol.">
        <title>The genome of Xanthomonas campestris pv. campestris B100 and its use for the reconstruction of metabolic pathways involved in xanthan biosynthesis.</title>
        <authorList>
            <person name="Vorhoelter F.-J."/>
            <person name="Schneiker S."/>
            <person name="Goesmann A."/>
            <person name="Krause L."/>
            <person name="Bekel T."/>
            <person name="Kaiser O."/>
            <person name="Linke B."/>
            <person name="Patschkowski T."/>
            <person name="Rueckert C."/>
            <person name="Schmid J."/>
            <person name="Sidhu V.K."/>
            <person name="Sieber V."/>
            <person name="Tauch A."/>
            <person name="Watt S.A."/>
            <person name="Weisshaar B."/>
            <person name="Becker A."/>
            <person name="Niehaus K."/>
            <person name="Puehler A."/>
        </authorList>
    </citation>
    <scope>NUCLEOTIDE SEQUENCE [LARGE SCALE GENOMIC DNA]</scope>
    <source>
        <strain>B100</strain>
    </source>
</reference>
<evidence type="ECO:0000255" key="1">
    <source>
        <dbReference type="HAMAP-Rule" id="MF_00034"/>
    </source>
</evidence>